<organism>
    <name type="scientific">Rickettsia prowazekii (strain Madrid E)</name>
    <dbReference type="NCBI Taxonomy" id="272947"/>
    <lineage>
        <taxon>Bacteria</taxon>
        <taxon>Pseudomonadati</taxon>
        <taxon>Pseudomonadota</taxon>
        <taxon>Alphaproteobacteria</taxon>
        <taxon>Rickettsiales</taxon>
        <taxon>Rickettsiaceae</taxon>
        <taxon>Rickettsieae</taxon>
        <taxon>Rickettsia</taxon>
        <taxon>typhus group</taxon>
    </lineage>
</organism>
<proteinExistence type="inferred from homology"/>
<name>TLCC_RICPR</name>
<dbReference type="EMBL" id="AJ235271">
    <property type="protein sequence ID" value="CAA14932.1"/>
    <property type="molecule type" value="Genomic_DNA"/>
</dbReference>
<dbReference type="PIR" id="B71707">
    <property type="entry name" value="B71707"/>
</dbReference>
<dbReference type="RefSeq" id="NP_220856.1">
    <property type="nucleotide sequence ID" value="NC_000963.1"/>
</dbReference>
<dbReference type="RefSeq" id="WP_004599498.1">
    <property type="nucleotide sequence ID" value="NC_000963.1"/>
</dbReference>
<dbReference type="STRING" id="272947.gene:17555557"/>
<dbReference type="EnsemblBacteria" id="CAA14932">
    <property type="protein sequence ID" value="CAA14932"/>
    <property type="gene ID" value="CAA14932"/>
</dbReference>
<dbReference type="KEGG" id="rpr:RP477"/>
<dbReference type="PATRIC" id="fig|272947.5.peg.489"/>
<dbReference type="eggNOG" id="COG3202">
    <property type="taxonomic scope" value="Bacteria"/>
</dbReference>
<dbReference type="HOGENOM" id="CLU_023964_0_1_5"/>
<dbReference type="OrthoDB" id="19786at2"/>
<dbReference type="Proteomes" id="UP000002480">
    <property type="component" value="Chromosome"/>
</dbReference>
<dbReference type="GO" id="GO:0005886">
    <property type="term" value="C:plasma membrane"/>
    <property type="evidence" value="ECO:0007669"/>
    <property type="project" value="UniProtKB-SubCell"/>
</dbReference>
<dbReference type="GO" id="GO:0005524">
    <property type="term" value="F:ATP binding"/>
    <property type="evidence" value="ECO:0007669"/>
    <property type="project" value="UniProtKB-KW"/>
</dbReference>
<dbReference type="GO" id="GO:0005471">
    <property type="term" value="F:ATP:ADP antiporter activity"/>
    <property type="evidence" value="ECO:0007669"/>
    <property type="project" value="InterPro"/>
</dbReference>
<dbReference type="InterPro" id="IPR004667">
    <property type="entry name" value="ADP_ATP_car_bac_type"/>
</dbReference>
<dbReference type="NCBIfam" id="TIGR00769">
    <property type="entry name" value="AAA"/>
    <property type="match status" value="1"/>
</dbReference>
<dbReference type="PANTHER" id="PTHR31187">
    <property type="match status" value="1"/>
</dbReference>
<dbReference type="PANTHER" id="PTHR31187:SF1">
    <property type="entry name" value="ADP,ATP CARRIER PROTEIN 1"/>
    <property type="match status" value="1"/>
</dbReference>
<dbReference type="Pfam" id="PF03219">
    <property type="entry name" value="TLC"/>
    <property type="match status" value="1"/>
</dbReference>
<gene>
    <name type="primary">tlcC</name>
    <name type="synonym">tlc3</name>
    <name type="ordered locus">RP477</name>
</gene>
<evidence type="ECO:0000255" key="1"/>
<evidence type="ECO:0000305" key="2"/>
<accession>Q9ZD67</accession>
<comment type="function">
    <text>Provides the rickettsial cell with host ATP in exchange for rickettsial ADP. This is an obligate exchange system. This energy acquiring activity is an important component of rickettsial parasitism.</text>
</comment>
<comment type="subcellular location">
    <subcellularLocation>
        <location>Cell membrane</location>
        <topology>Multi-pass membrane protein</topology>
    </subcellularLocation>
</comment>
<comment type="similarity">
    <text evidence="2">Belongs to the ADP/ATP translocase tlc family.</text>
</comment>
<protein>
    <recommendedName>
        <fullName>ADP,ATP carrier protein 3</fullName>
    </recommendedName>
    <alternativeName>
        <fullName>ADP/ATP translocase 3</fullName>
    </alternativeName>
</protein>
<reference key="1">
    <citation type="journal article" date="1998" name="Nature">
        <title>The genome sequence of Rickettsia prowazekii and the origin of mitochondria.</title>
        <authorList>
            <person name="Andersson S.G.E."/>
            <person name="Zomorodipour A."/>
            <person name="Andersson J.O."/>
            <person name="Sicheritz-Ponten T."/>
            <person name="Alsmark U.C.M."/>
            <person name="Podowski R.M."/>
            <person name="Naeslund A.K."/>
            <person name="Eriksson A.-S."/>
            <person name="Winkler H.H."/>
            <person name="Kurland C.G."/>
        </authorList>
    </citation>
    <scope>NUCLEOTIDE SEQUENCE [LARGE SCALE GENOMIC DNA]</scope>
    <source>
        <strain>Madrid E</strain>
    </source>
</reference>
<sequence length="501" mass="57182">MLPPKIFFEKVKEIIWPIERKELKLFIPMALMMLCILFNFGALRSIKDSLVVPSMGAEIISFLKLWLVLPSCVIFTILYVKLSNKLNFEYIFYSIVGTFLLFFLLFAYIIYPNQDIYHPNDAMINNLIASYPNLKWFIKIGSKWSYALMYIFSELWSAVVINLMFWQFANHIFDTAKAKRFYPVLGMVGNIGLIIAGSVLVFFSSGQYIIDSELLTDSYNSSSNNSIMLQPIISIIVTAGIIAMFLFRIINKFILTNSINVLDVKKVAAKTKTKLALIESIKLIIHSKYIGRIALLIICYGLLINIVEGPWKAKIKELHPNTVDYVNFMGMFNIWMGISCVTFMIIGSNILRRLGWLISALLTPIMLSITGFMFFIFIIFIEEIGTCFGDFNLLYVAIIVGAIQNILSKSSKYSLFDSTKEMAYIPLSLELRTKGKAAVEVIGTKFGKSLGAFIQSLIFIIIPTATFDSIIIYLLVIFIVMMNLWIWNIIKLNKEYIKLCQ</sequence>
<feature type="chain" id="PRO_0000102582" description="ADP,ATP carrier protein 3">
    <location>
        <begin position="1"/>
        <end position="501"/>
    </location>
</feature>
<feature type="transmembrane region" description="Helical" evidence="1">
    <location>
        <begin position="23"/>
        <end position="43"/>
    </location>
</feature>
<feature type="transmembrane region" description="Helical" evidence="1">
    <location>
        <begin position="59"/>
        <end position="79"/>
    </location>
</feature>
<feature type="transmembrane region" description="Helical" evidence="1">
    <location>
        <begin position="90"/>
        <end position="110"/>
    </location>
</feature>
<feature type="transmembrane region" description="Helical" evidence="1">
    <location>
        <begin position="146"/>
        <end position="166"/>
    </location>
</feature>
<feature type="transmembrane region" description="Helical" evidence="1">
    <location>
        <begin position="183"/>
        <end position="203"/>
    </location>
</feature>
<feature type="transmembrane region" description="Helical" evidence="1">
    <location>
        <begin position="227"/>
        <end position="247"/>
    </location>
</feature>
<feature type="transmembrane region" description="Helical" evidence="1">
    <location>
        <begin position="293"/>
        <end position="313"/>
    </location>
</feature>
<feature type="transmembrane region" description="Helical" evidence="1">
    <location>
        <begin position="326"/>
        <end position="346"/>
    </location>
</feature>
<feature type="transmembrane region" description="Helical" evidence="1">
    <location>
        <begin position="361"/>
        <end position="381"/>
    </location>
</feature>
<feature type="transmembrane region" description="Helical" evidence="1">
    <location>
        <begin position="383"/>
        <end position="403"/>
    </location>
</feature>
<feature type="transmembrane region" description="Helical" evidence="1">
    <location>
        <begin position="446"/>
        <end position="466"/>
    </location>
</feature>
<feature type="transmembrane region" description="Helical" evidence="1">
    <location>
        <begin position="470"/>
        <end position="490"/>
    </location>
</feature>
<keyword id="KW-0067">ATP-binding</keyword>
<keyword id="KW-1003">Cell membrane</keyword>
<keyword id="KW-0472">Membrane</keyword>
<keyword id="KW-0547">Nucleotide-binding</keyword>
<keyword id="KW-1185">Reference proteome</keyword>
<keyword id="KW-0812">Transmembrane</keyword>
<keyword id="KW-1133">Transmembrane helix</keyword>
<keyword id="KW-0813">Transport</keyword>